<accession>Q90932</accession>
<comment type="function">
    <text>Recognizes and binds the palindromic sequence 5'-TTGGCNNNNNGCCAA-3' present in viral and cellular promoters and in the origin of replication of adenovirus type 2. These proteins are individually capable of activating transcription and replication.</text>
</comment>
<comment type="subunit">
    <text>Binds DNA as a homodimer.</text>
</comment>
<comment type="subcellular location">
    <subcellularLocation>
        <location>Nucleus</location>
    </subcellularLocation>
</comment>
<comment type="alternative products">
    <event type="alternative splicing"/>
    <isoform>
        <id>Q90932-1</id>
        <name>1</name>
        <sequence type="displayed"/>
    </isoform>
    <text>A number of isoforms are produced.</text>
</comment>
<comment type="domain">
    <text evidence="1">The 9aaTAD motif is a transactivation domain present in a large number of yeast and animal transcription factors.</text>
</comment>
<comment type="similarity">
    <text evidence="2">Belongs to the CTF/NF-I family.</text>
</comment>
<sequence length="431" mass="46903">MYSPYCLTQDEFHPFIEALLPHVRAFSYTWFNLQARKRKYFKKHEKRMSKEEERAVKDELLGEKPEVKQKWASRLLAKLRKDIRPECREDFVLSVTGKKAPCCVLSNPDQKGKIRRIDCLRQADKVWRLDLVMVILFKGVPLESTDGERLAKAPQCASPGLCVQPHHIGVTIKELDLYLAFFVQAPDSGQSDSSNPQGDADIKPLPNGHLSFQDCFVTSGVWNVTELVRVSQTPVATASGPNFSLADLESPGGYYNISPVTLGRRPLGPPTASGPKRPKALDEGDLEGPGDDVFYSGPGRSPAPGSSQGPWGGDVDTSPATLKKSGKLDFCSALSGHAASPRMAFGHHPLPVLAGVRPASALHFPSGSLLPQSGPYFAHPTIRYHHGQDSLKDFVQFVCADGAAQGPQHSQRPAPPLPPALSASDPATATF</sequence>
<keyword id="KW-0010">Activator</keyword>
<keyword id="KW-0025">Alternative splicing</keyword>
<keyword id="KW-0235">DNA replication</keyword>
<keyword id="KW-0238">DNA-binding</keyword>
<keyword id="KW-0539">Nucleus</keyword>
<keyword id="KW-1185">Reference proteome</keyword>
<keyword id="KW-0804">Transcription</keyword>
<keyword id="KW-0805">Transcription regulation</keyword>
<proteinExistence type="evidence at transcript level"/>
<gene>
    <name type="primary">NFIX</name>
    <name type="synonym">NFI-X</name>
</gene>
<name>NFIX_CHICK</name>
<dbReference type="EMBL" id="X61225">
    <property type="protein sequence ID" value="CAA43537.1"/>
    <property type="molecule type" value="mRNA"/>
</dbReference>
<dbReference type="PIR" id="S20065">
    <property type="entry name" value="S20065"/>
</dbReference>
<dbReference type="RefSeq" id="NP_990601.1">
    <property type="nucleotide sequence ID" value="NM_205270.1"/>
</dbReference>
<dbReference type="SMR" id="Q90932"/>
<dbReference type="FunCoup" id="Q90932">
    <property type="interactions" value="143"/>
</dbReference>
<dbReference type="STRING" id="9031.ENSGALP00000053703"/>
<dbReference type="GeneID" id="396207"/>
<dbReference type="KEGG" id="gga:396207"/>
<dbReference type="CTD" id="4784"/>
<dbReference type="VEuPathDB" id="HostDB:geneid_396207"/>
<dbReference type="InParanoid" id="Q90932"/>
<dbReference type="OrthoDB" id="10055441at2759"/>
<dbReference type="PhylomeDB" id="Q90932"/>
<dbReference type="PRO" id="PR:Q90932"/>
<dbReference type="Proteomes" id="UP000000539">
    <property type="component" value="Unassembled WGS sequence"/>
</dbReference>
<dbReference type="GO" id="GO:0005634">
    <property type="term" value="C:nucleus"/>
    <property type="evidence" value="ECO:0000318"/>
    <property type="project" value="GO_Central"/>
</dbReference>
<dbReference type="GO" id="GO:0000981">
    <property type="term" value="F:DNA-binding transcription factor activity, RNA polymerase II-specific"/>
    <property type="evidence" value="ECO:0000318"/>
    <property type="project" value="GO_Central"/>
</dbReference>
<dbReference type="GO" id="GO:0000978">
    <property type="term" value="F:RNA polymerase II cis-regulatory region sequence-specific DNA binding"/>
    <property type="evidence" value="ECO:0000318"/>
    <property type="project" value="GO_Central"/>
</dbReference>
<dbReference type="GO" id="GO:0006260">
    <property type="term" value="P:DNA replication"/>
    <property type="evidence" value="ECO:0007669"/>
    <property type="project" value="UniProtKB-KW"/>
</dbReference>
<dbReference type="GO" id="GO:0045893">
    <property type="term" value="P:positive regulation of DNA-templated transcription"/>
    <property type="evidence" value="ECO:0007669"/>
    <property type="project" value="UniProtKB-ARBA"/>
</dbReference>
<dbReference type="GO" id="GO:0006357">
    <property type="term" value="P:regulation of transcription by RNA polymerase II"/>
    <property type="evidence" value="ECO:0000318"/>
    <property type="project" value="GO_Central"/>
</dbReference>
<dbReference type="InterPro" id="IPR000647">
    <property type="entry name" value="CTF/NFI"/>
</dbReference>
<dbReference type="InterPro" id="IPR020604">
    <property type="entry name" value="CTF/NFI_DNA-bd-dom"/>
</dbReference>
<dbReference type="InterPro" id="IPR019739">
    <property type="entry name" value="CTF/NFI_DNA-bd_CS"/>
</dbReference>
<dbReference type="InterPro" id="IPR019548">
    <property type="entry name" value="CTF/NFI_DNA-bd_N"/>
</dbReference>
<dbReference type="InterPro" id="IPR003619">
    <property type="entry name" value="MAD_homology1_Dwarfin-type"/>
</dbReference>
<dbReference type="PANTHER" id="PTHR11492:SF3">
    <property type="entry name" value="NUCLEAR FACTOR 1 X-TYPE"/>
    <property type="match status" value="1"/>
</dbReference>
<dbReference type="PANTHER" id="PTHR11492">
    <property type="entry name" value="NUCLEAR FACTOR I"/>
    <property type="match status" value="1"/>
</dbReference>
<dbReference type="Pfam" id="PF00859">
    <property type="entry name" value="CTF_NFI"/>
    <property type="match status" value="1"/>
</dbReference>
<dbReference type="Pfam" id="PF03165">
    <property type="entry name" value="MH1"/>
    <property type="match status" value="1"/>
</dbReference>
<dbReference type="Pfam" id="PF10524">
    <property type="entry name" value="NfI_DNAbd_pre-N"/>
    <property type="match status" value="1"/>
</dbReference>
<dbReference type="SMART" id="SM00523">
    <property type="entry name" value="DWA"/>
    <property type="match status" value="1"/>
</dbReference>
<dbReference type="PROSITE" id="PS00349">
    <property type="entry name" value="CTF_NFI_1"/>
    <property type="match status" value="1"/>
</dbReference>
<dbReference type="PROSITE" id="PS51080">
    <property type="entry name" value="CTF_NFI_2"/>
    <property type="match status" value="1"/>
</dbReference>
<evidence type="ECO:0000250" key="1">
    <source>
        <dbReference type="UniProtKB" id="Q14938"/>
    </source>
</evidence>
<evidence type="ECO:0000255" key="2">
    <source>
        <dbReference type="PROSITE-ProRule" id="PRU00436"/>
    </source>
</evidence>
<evidence type="ECO:0000256" key="3">
    <source>
        <dbReference type="SAM" id="MobiDB-lite"/>
    </source>
</evidence>
<organism>
    <name type="scientific">Gallus gallus</name>
    <name type="common">Chicken</name>
    <dbReference type="NCBI Taxonomy" id="9031"/>
    <lineage>
        <taxon>Eukaryota</taxon>
        <taxon>Metazoa</taxon>
        <taxon>Chordata</taxon>
        <taxon>Craniata</taxon>
        <taxon>Vertebrata</taxon>
        <taxon>Euteleostomi</taxon>
        <taxon>Archelosauria</taxon>
        <taxon>Archosauria</taxon>
        <taxon>Dinosauria</taxon>
        <taxon>Saurischia</taxon>
        <taxon>Theropoda</taxon>
        <taxon>Coelurosauria</taxon>
        <taxon>Aves</taxon>
        <taxon>Neognathae</taxon>
        <taxon>Galloanserae</taxon>
        <taxon>Galliformes</taxon>
        <taxon>Phasianidae</taxon>
        <taxon>Phasianinae</taxon>
        <taxon>Gallus</taxon>
    </lineage>
</organism>
<feature type="chain" id="PRO_0000100206" description="Nuclear factor 1 X-type">
    <location>
        <begin position="1"/>
        <end position="431"/>
    </location>
</feature>
<feature type="DNA-binding region" description="CTF/NF-I" evidence="2">
    <location>
        <begin position="1"/>
        <end position="194"/>
    </location>
</feature>
<feature type="region of interest" description="Disordered" evidence="3">
    <location>
        <begin position="259"/>
        <end position="319"/>
    </location>
</feature>
<feature type="region of interest" description="Disordered" evidence="3">
    <location>
        <begin position="404"/>
        <end position="431"/>
    </location>
</feature>
<feature type="short sequence motif" description="9aaTAD" evidence="1">
    <location>
        <begin position="389"/>
        <end position="397"/>
    </location>
</feature>
<feature type="compositionally biased region" description="Low complexity" evidence="3">
    <location>
        <begin position="296"/>
        <end position="309"/>
    </location>
</feature>
<feature type="compositionally biased region" description="Low complexity" evidence="3">
    <location>
        <begin position="420"/>
        <end position="431"/>
    </location>
</feature>
<reference key="1">
    <citation type="journal article" date="1991" name="Nucleic Acids Res.">
        <title>Identification of a fourth nuclear factor I gene in chicken by cDNA cloning: NFI-X.</title>
        <authorList>
            <person name="Kruse U."/>
            <person name="Qian F."/>
            <person name="Sippel A.E."/>
        </authorList>
    </citation>
    <scope>NUCLEOTIDE SEQUENCE [MRNA]</scope>
</reference>
<protein>
    <recommendedName>
        <fullName>Nuclear factor 1 X-type</fullName>
        <shortName>NF1-X</shortName>
        <shortName>Nuclear factor 1/X</shortName>
    </recommendedName>
    <alternativeName>
        <fullName>CCAAT-box-binding transcription factor</fullName>
        <shortName>CTF</shortName>
    </alternativeName>
    <alternativeName>
        <fullName>Nuclear factor I/X</fullName>
        <shortName>NF-I/X</shortName>
        <shortName>NFI-X</shortName>
    </alternativeName>
    <alternativeName>
        <fullName>TGGCA-binding protein</fullName>
    </alternativeName>
</protein>